<proteinExistence type="inferred from homology"/>
<feature type="chain" id="PRO_1000022124" description="Isoleucine--tRNA ligase">
    <location>
        <begin position="1"/>
        <end position="938"/>
    </location>
</feature>
<feature type="short sequence motif" description="'HIGH' region">
    <location>
        <begin position="58"/>
        <end position="68"/>
    </location>
</feature>
<feature type="short sequence motif" description="'KMSKS' region">
    <location>
        <begin position="602"/>
        <end position="606"/>
    </location>
</feature>
<feature type="binding site" evidence="1">
    <location>
        <position position="561"/>
    </location>
    <ligand>
        <name>L-isoleucyl-5'-AMP</name>
        <dbReference type="ChEBI" id="CHEBI:178002"/>
    </ligand>
</feature>
<feature type="binding site" evidence="1">
    <location>
        <position position="605"/>
    </location>
    <ligand>
        <name>ATP</name>
        <dbReference type="ChEBI" id="CHEBI:30616"/>
    </ligand>
</feature>
<feature type="binding site" evidence="1">
    <location>
        <position position="901"/>
    </location>
    <ligand>
        <name>Zn(2+)</name>
        <dbReference type="ChEBI" id="CHEBI:29105"/>
    </ligand>
</feature>
<feature type="binding site" evidence="1">
    <location>
        <position position="904"/>
    </location>
    <ligand>
        <name>Zn(2+)</name>
        <dbReference type="ChEBI" id="CHEBI:29105"/>
    </ligand>
</feature>
<feature type="binding site" evidence="1">
    <location>
        <position position="921"/>
    </location>
    <ligand>
        <name>Zn(2+)</name>
        <dbReference type="ChEBI" id="CHEBI:29105"/>
    </ligand>
</feature>
<feature type="binding site" evidence="1">
    <location>
        <position position="924"/>
    </location>
    <ligand>
        <name>Zn(2+)</name>
        <dbReference type="ChEBI" id="CHEBI:29105"/>
    </ligand>
</feature>
<feature type="modified residue" description="N6-acetyllysine" evidence="1">
    <location>
        <position position="183"/>
    </location>
</feature>
<reference key="1">
    <citation type="journal article" date="2005" name="Nucleic Acids Res.">
        <title>Genome dynamics and diversity of Shigella species, the etiologic agents of bacillary dysentery.</title>
        <authorList>
            <person name="Yang F."/>
            <person name="Yang J."/>
            <person name="Zhang X."/>
            <person name="Chen L."/>
            <person name="Jiang Y."/>
            <person name="Yan Y."/>
            <person name="Tang X."/>
            <person name="Wang J."/>
            <person name="Xiong Z."/>
            <person name="Dong J."/>
            <person name="Xue Y."/>
            <person name="Zhu Y."/>
            <person name="Xu X."/>
            <person name="Sun L."/>
            <person name="Chen S."/>
            <person name="Nie H."/>
            <person name="Peng J."/>
            <person name="Xu J."/>
            <person name="Wang Y."/>
            <person name="Yuan Z."/>
            <person name="Wen Y."/>
            <person name="Yao Z."/>
            <person name="Shen Y."/>
            <person name="Qiang B."/>
            <person name="Hou Y."/>
            <person name="Yu J."/>
            <person name="Jin Q."/>
        </authorList>
    </citation>
    <scope>NUCLEOTIDE SEQUENCE [LARGE SCALE GENOMIC DNA]</scope>
    <source>
        <strain>Sb227</strain>
    </source>
</reference>
<keyword id="KW-0007">Acetylation</keyword>
<keyword id="KW-0030">Aminoacyl-tRNA synthetase</keyword>
<keyword id="KW-0067">ATP-binding</keyword>
<keyword id="KW-0963">Cytoplasm</keyword>
<keyword id="KW-0436">Ligase</keyword>
<keyword id="KW-0479">Metal-binding</keyword>
<keyword id="KW-0547">Nucleotide-binding</keyword>
<keyword id="KW-0648">Protein biosynthesis</keyword>
<keyword id="KW-0862">Zinc</keyword>
<dbReference type="EC" id="6.1.1.5" evidence="1"/>
<dbReference type="EMBL" id="CP000036">
    <property type="protein sequence ID" value="ABB64761.1"/>
    <property type="molecule type" value="Genomic_DNA"/>
</dbReference>
<dbReference type="RefSeq" id="WP_001286849.1">
    <property type="nucleotide sequence ID" value="NC_007613.1"/>
</dbReference>
<dbReference type="SMR" id="Q326J7"/>
<dbReference type="KEGG" id="sbo:SBO_0025"/>
<dbReference type="HOGENOM" id="CLU_001493_7_1_6"/>
<dbReference type="Proteomes" id="UP000007067">
    <property type="component" value="Chromosome"/>
</dbReference>
<dbReference type="GO" id="GO:0005829">
    <property type="term" value="C:cytosol"/>
    <property type="evidence" value="ECO:0007669"/>
    <property type="project" value="TreeGrafter"/>
</dbReference>
<dbReference type="GO" id="GO:0002161">
    <property type="term" value="F:aminoacyl-tRNA deacylase activity"/>
    <property type="evidence" value="ECO:0007669"/>
    <property type="project" value="InterPro"/>
</dbReference>
<dbReference type="GO" id="GO:0005524">
    <property type="term" value="F:ATP binding"/>
    <property type="evidence" value="ECO:0007669"/>
    <property type="project" value="UniProtKB-UniRule"/>
</dbReference>
<dbReference type="GO" id="GO:0004822">
    <property type="term" value="F:isoleucine-tRNA ligase activity"/>
    <property type="evidence" value="ECO:0007669"/>
    <property type="project" value="UniProtKB-UniRule"/>
</dbReference>
<dbReference type="GO" id="GO:0000049">
    <property type="term" value="F:tRNA binding"/>
    <property type="evidence" value="ECO:0007669"/>
    <property type="project" value="InterPro"/>
</dbReference>
<dbReference type="GO" id="GO:0008270">
    <property type="term" value="F:zinc ion binding"/>
    <property type="evidence" value="ECO:0007669"/>
    <property type="project" value="UniProtKB-UniRule"/>
</dbReference>
<dbReference type="GO" id="GO:0006428">
    <property type="term" value="P:isoleucyl-tRNA aminoacylation"/>
    <property type="evidence" value="ECO:0007669"/>
    <property type="project" value="UniProtKB-UniRule"/>
</dbReference>
<dbReference type="CDD" id="cd07960">
    <property type="entry name" value="Anticodon_Ia_Ile_BEm"/>
    <property type="match status" value="1"/>
</dbReference>
<dbReference type="CDD" id="cd00818">
    <property type="entry name" value="IleRS_core"/>
    <property type="match status" value="1"/>
</dbReference>
<dbReference type="FunFam" id="1.10.730.20:FF:000001">
    <property type="entry name" value="Isoleucine--tRNA ligase"/>
    <property type="match status" value="1"/>
</dbReference>
<dbReference type="FunFam" id="3.40.50.620:FF:000042">
    <property type="entry name" value="Isoleucine--tRNA ligase"/>
    <property type="match status" value="1"/>
</dbReference>
<dbReference type="FunFam" id="3.40.50.620:FF:000048">
    <property type="entry name" value="Isoleucine--tRNA ligase"/>
    <property type="match status" value="1"/>
</dbReference>
<dbReference type="FunFam" id="3.90.740.10:FF:000002">
    <property type="entry name" value="Isoleucine--tRNA ligase"/>
    <property type="match status" value="1"/>
</dbReference>
<dbReference type="Gene3D" id="1.10.730.20">
    <property type="match status" value="1"/>
</dbReference>
<dbReference type="Gene3D" id="3.40.50.620">
    <property type="entry name" value="HUPs"/>
    <property type="match status" value="2"/>
</dbReference>
<dbReference type="Gene3D" id="3.90.740.10">
    <property type="entry name" value="Valyl/Leucyl/Isoleucyl-tRNA synthetase, editing domain"/>
    <property type="match status" value="1"/>
</dbReference>
<dbReference type="HAMAP" id="MF_02002">
    <property type="entry name" value="Ile_tRNA_synth_type1"/>
    <property type="match status" value="1"/>
</dbReference>
<dbReference type="InterPro" id="IPR001412">
    <property type="entry name" value="aa-tRNA-synth_I_CS"/>
</dbReference>
<dbReference type="InterPro" id="IPR002300">
    <property type="entry name" value="aa-tRNA-synth_Ia"/>
</dbReference>
<dbReference type="InterPro" id="IPR033708">
    <property type="entry name" value="Anticodon_Ile_BEm"/>
</dbReference>
<dbReference type="InterPro" id="IPR002301">
    <property type="entry name" value="Ile-tRNA-ligase"/>
</dbReference>
<dbReference type="InterPro" id="IPR023585">
    <property type="entry name" value="Ile-tRNA-ligase_type1"/>
</dbReference>
<dbReference type="InterPro" id="IPR050081">
    <property type="entry name" value="Ile-tRNA_ligase"/>
</dbReference>
<dbReference type="InterPro" id="IPR013155">
    <property type="entry name" value="M/V/L/I-tRNA-synth_anticd-bd"/>
</dbReference>
<dbReference type="InterPro" id="IPR014729">
    <property type="entry name" value="Rossmann-like_a/b/a_fold"/>
</dbReference>
<dbReference type="InterPro" id="IPR009080">
    <property type="entry name" value="tRNAsynth_Ia_anticodon-bd"/>
</dbReference>
<dbReference type="InterPro" id="IPR009008">
    <property type="entry name" value="Val/Leu/Ile-tRNA-synth_edit"/>
</dbReference>
<dbReference type="InterPro" id="IPR010663">
    <property type="entry name" value="Znf_FPG/IleRS"/>
</dbReference>
<dbReference type="NCBIfam" id="TIGR00392">
    <property type="entry name" value="ileS"/>
    <property type="match status" value="1"/>
</dbReference>
<dbReference type="PANTHER" id="PTHR42765:SF1">
    <property type="entry name" value="ISOLEUCINE--TRNA LIGASE, MITOCHONDRIAL"/>
    <property type="match status" value="1"/>
</dbReference>
<dbReference type="PANTHER" id="PTHR42765">
    <property type="entry name" value="SOLEUCYL-TRNA SYNTHETASE"/>
    <property type="match status" value="1"/>
</dbReference>
<dbReference type="Pfam" id="PF08264">
    <property type="entry name" value="Anticodon_1"/>
    <property type="match status" value="1"/>
</dbReference>
<dbReference type="Pfam" id="PF00133">
    <property type="entry name" value="tRNA-synt_1"/>
    <property type="match status" value="1"/>
</dbReference>
<dbReference type="Pfam" id="PF06827">
    <property type="entry name" value="zf-FPG_IleRS"/>
    <property type="match status" value="1"/>
</dbReference>
<dbReference type="PRINTS" id="PR00984">
    <property type="entry name" value="TRNASYNTHILE"/>
</dbReference>
<dbReference type="SUPFAM" id="SSF47323">
    <property type="entry name" value="Anticodon-binding domain of a subclass of class I aminoacyl-tRNA synthetases"/>
    <property type="match status" value="1"/>
</dbReference>
<dbReference type="SUPFAM" id="SSF52374">
    <property type="entry name" value="Nucleotidylyl transferase"/>
    <property type="match status" value="1"/>
</dbReference>
<dbReference type="SUPFAM" id="SSF50677">
    <property type="entry name" value="ValRS/IleRS/LeuRS editing domain"/>
    <property type="match status" value="1"/>
</dbReference>
<dbReference type="PROSITE" id="PS00178">
    <property type="entry name" value="AA_TRNA_LIGASE_I"/>
    <property type="match status" value="1"/>
</dbReference>
<evidence type="ECO:0000255" key="1">
    <source>
        <dbReference type="HAMAP-Rule" id="MF_02002"/>
    </source>
</evidence>
<gene>
    <name evidence="1" type="primary">ileS</name>
    <name type="ordered locus">SBO_0025</name>
</gene>
<protein>
    <recommendedName>
        <fullName evidence="1">Isoleucine--tRNA ligase</fullName>
        <ecNumber evidence="1">6.1.1.5</ecNumber>
    </recommendedName>
    <alternativeName>
        <fullName evidence="1">Isoleucyl-tRNA synthetase</fullName>
        <shortName evidence="1">IleRS</shortName>
    </alternativeName>
</protein>
<comment type="function">
    <text evidence="1">Catalyzes the attachment of isoleucine to tRNA(Ile). As IleRS can inadvertently accommodate and process structurally similar amino acids such as valine, to avoid such errors it has two additional distinct tRNA(Ile)-dependent editing activities. One activity is designated as 'pretransfer' editing and involves the hydrolysis of activated Val-AMP. The other activity is designated 'posttransfer' editing and involves deacylation of mischarged Val-tRNA(Ile).</text>
</comment>
<comment type="catalytic activity">
    <reaction evidence="1">
        <text>tRNA(Ile) + L-isoleucine + ATP = L-isoleucyl-tRNA(Ile) + AMP + diphosphate</text>
        <dbReference type="Rhea" id="RHEA:11060"/>
        <dbReference type="Rhea" id="RHEA-COMP:9666"/>
        <dbReference type="Rhea" id="RHEA-COMP:9695"/>
        <dbReference type="ChEBI" id="CHEBI:30616"/>
        <dbReference type="ChEBI" id="CHEBI:33019"/>
        <dbReference type="ChEBI" id="CHEBI:58045"/>
        <dbReference type="ChEBI" id="CHEBI:78442"/>
        <dbReference type="ChEBI" id="CHEBI:78528"/>
        <dbReference type="ChEBI" id="CHEBI:456215"/>
        <dbReference type="EC" id="6.1.1.5"/>
    </reaction>
</comment>
<comment type="cofactor">
    <cofactor evidence="1">
        <name>Zn(2+)</name>
        <dbReference type="ChEBI" id="CHEBI:29105"/>
    </cofactor>
    <text evidence="1">Binds 1 zinc ion per subunit.</text>
</comment>
<comment type="subunit">
    <text evidence="1">Monomer.</text>
</comment>
<comment type="subcellular location">
    <subcellularLocation>
        <location evidence="1">Cytoplasm</location>
    </subcellularLocation>
</comment>
<comment type="domain">
    <text evidence="1">IleRS has two distinct active sites: one for aminoacylation and one for editing. The misactivated valine is translocated from the active site to the editing site, which sterically excludes the correctly activated isoleucine. The single editing site contains two valyl binding pockets, one specific for each substrate (Val-AMP or Val-tRNA(Ile)).</text>
</comment>
<comment type="similarity">
    <text evidence="1">Belongs to the class-I aminoacyl-tRNA synthetase family. IleS type 1 subfamily.</text>
</comment>
<name>SYI_SHIBS</name>
<sequence>MSDYKSTLNLPETGFPMRGDLAKREPGMLARWTDDDLYGIIRAAKKGKKTFILHDGPPYANGSIHIGHSVNKILKDIIVKSKGLSGYDSPYVPGWDCHGLPIELKVEQEYGKPGEKFTAAEFRAKCREYAATQVDGQRKDFIRLGVLGDWSHPYLTMDFKTEANIIRALGKIIGNGHLHKGAKPVHWCVDCRSALAEAEVEYYDKTSPSIDVAFQAVDQDALKAKFAVSNVNGPISLVIWTTTPWTLPANRAISIAPDFDYALVQIDGQAVILAKDLVESVMQRIGVTDYTILGTVKGAELELLRFTHPFMGFDVPAILGDHVTLDAGTGAVHTAPGHGPDDYVIGQKYGLETANPVGPDGTYLPGTYPTLDGVNVFKANDIVVALLQEKGALLHVEKMQHSYPCCWRHKTPIIFRATPQWFVSMDQKGLRAQSLKEIKGVQWIPDWGQARIESMVANRPDWCISRQRTWGVPMSLFVHKDTEELHPRTLELMEEVAKRVEVDGIQAWWDLDAKEILGDEADQYVKVPDTLDVWFDSGSTHFSVVDVRPEFAGHAADMYLEGSDQHRGWFMSSLMISTAMKGKAPYRQVLTHGFTVDGQGRKMSKSIGNTVSPQDVMNKLGADILRLWVASTDYTGEMAVSDEILKRAADSYRRIRNTARFLLANLNGFDPAKDMVKPEEMVVLDRWAVGCAKAAQEDILKAYEAYDFHEVVQRLMRFCSVEMGSFYLDIIKDRQYTAKADSVARRSCQTALYHIAEALVRWMAPILSFTADEVWGYLPGEREKYVFTGEWYEGLFGLADSEAMNDAFWDELLKVRGEVNKVIEQARADKKVGGSLEAAVTLYAEPELAAKLTALGDELRFVLLTSGATVADYHDAPADAQQSEVLKGLKVALSKAEGEKCPRCWHYTQDVGKVAEHAEICGRCVSNVAGDGEKRKFA</sequence>
<accession>Q326J7</accession>
<organism>
    <name type="scientific">Shigella boydii serotype 4 (strain Sb227)</name>
    <dbReference type="NCBI Taxonomy" id="300268"/>
    <lineage>
        <taxon>Bacteria</taxon>
        <taxon>Pseudomonadati</taxon>
        <taxon>Pseudomonadota</taxon>
        <taxon>Gammaproteobacteria</taxon>
        <taxon>Enterobacterales</taxon>
        <taxon>Enterobacteriaceae</taxon>
        <taxon>Shigella</taxon>
    </lineage>
</organism>